<organism>
    <name type="scientific">Trichlorobacter lovleyi (strain ATCC BAA-1151 / DSM 17278 / SZ)</name>
    <name type="common">Geobacter lovleyi</name>
    <dbReference type="NCBI Taxonomy" id="398767"/>
    <lineage>
        <taxon>Bacteria</taxon>
        <taxon>Pseudomonadati</taxon>
        <taxon>Thermodesulfobacteriota</taxon>
        <taxon>Desulfuromonadia</taxon>
        <taxon>Geobacterales</taxon>
        <taxon>Geobacteraceae</taxon>
        <taxon>Trichlorobacter</taxon>
    </lineage>
</organism>
<evidence type="ECO:0000255" key="1">
    <source>
        <dbReference type="HAMAP-Rule" id="MF_00158"/>
    </source>
</evidence>
<reference key="1">
    <citation type="submission" date="2008-05" db="EMBL/GenBank/DDBJ databases">
        <title>Complete sequence of chromosome of Geobacter lovleyi SZ.</title>
        <authorList>
            <consortium name="US DOE Joint Genome Institute"/>
            <person name="Lucas S."/>
            <person name="Copeland A."/>
            <person name="Lapidus A."/>
            <person name="Glavina del Rio T."/>
            <person name="Dalin E."/>
            <person name="Tice H."/>
            <person name="Bruce D."/>
            <person name="Goodwin L."/>
            <person name="Pitluck S."/>
            <person name="Chertkov O."/>
            <person name="Meincke L."/>
            <person name="Brettin T."/>
            <person name="Detter J.C."/>
            <person name="Han C."/>
            <person name="Tapia R."/>
            <person name="Kuske C.R."/>
            <person name="Schmutz J."/>
            <person name="Larimer F."/>
            <person name="Land M."/>
            <person name="Hauser L."/>
            <person name="Kyrpides N."/>
            <person name="Mikhailova N."/>
            <person name="Sung Y."/>
            <person name="Fletcher K.E."/>
            <person name="Ritalahti K.M."/>
            <person name="Loeffler F.E."/>
            <person name="Richardson P."/>
        </authorList>
    </citation>
    <scope>NUCLEOTIDE SEQUENCE [LARGE SCALE GENOMIC DNA]</scope>
    <source>
        <strain>ATCC BAA-1151 / DSM 17278 / SZ</strain>
    </source>
</reference>
<feature type="chain" id="PRO_1000097070" description="Pantothenate synthetase">
    <location>
        <begin position="1"/>
        <end position="283"/>
    </location>
</feature>
<feature type="active site" description="Proton donor" evidence="1">
    <location>
        <position position="37"/>
    </location>
</feature>
<feature type="binding site" evidence="1">
    <location>
        <begin position="30"/>
        <end position="37"/>
    </location>
    <ligand>
        <name>ATP</name>
        <dbReference type="ChEBI" id="CHEBI:30616"/>
    </ligand>
</feature>
<feature type="binding site" evidence="1">
    <location>
        <position position="61"/>
    </location>
    <ligand>
        <name>(R)-pantoate</name>
        <dbReference type="ChEBI" id="CHEBI:15980"/>
    </ligand>
</feature>
<feature type="binding site" evidence="1">
    <location>
        <position position="61"/>
    </location>
    <ligand>
        <name>beta-alanine</name>
        <dbReference type="ChEBI" id="CHEBI:57966"/>
    </ligand>
</feature>
<feature type="binding site" evidence="1">
    <location>
        <begin position="147"/>
        <end position="150"/>
    </location>
    <ligand>
        <name>ATP</name>
        <dbReference type="ChEBI" id="CHEBI:30616"/>
    </ligand>
</feature>
<feature type="binding site" evidence="1">
    <location>
        <position position="153"/>
    </location>
    <ligand>
        <name>(R)-pantoate</name>
        <dbReference type="ChEBI" id="CHEBI:15980"/>
    </ligand>
</feature>
<feature type="binding site" evidence="1">
    <location>
        <position position="176"/>
    </location>
    <ligand>
        <name>ATP</name>
        <dbReference type="ChEBI" id="CHEBI:30616"/>
    </ligand>
</feature>
<feature type="binding site" evidence="1">
    <location>
        <begin position="184"/>
        <end position="187"/>
    </location>
    <ligand>
        <name>ATP</name>
        <dbReference type="ChEBI" id="CHEBI:30616"/>
    </ligand>
</feature>
<comment type="function">
    <text evidence="1">Catalyzes the condensation of pantoate with beta-alanine in an ATP-dependent reaction via a pantoyl-adenylate intermediate.</text>
</comment>
<comment type="catalytic activity">
    <reaction evidence="1">
        <text>(R)-pantoate + beta-alanine + ATP = (R)-pantothenate + AMP + diphosphate + H(+)</text>
        <dbReference type="Rhea" id="RHEA:10912"/>
        <dbReference type="ChEBI" id="CHEBI:15378"/>
        <dbReference type="ChEBI" id="CHEBI:15980"/>
        <dbReference type="ChEBI" id="CHEBI:29032"/>
        <dbReference type="ChEBI" id="CHEBI:30616"/>
        <dbReference type="ChEBI" id="CHEBI:33019"/>
        <dbReference type="ChEBI" id="CHEBI:57966"/>
        <dbReference type="ChEBI" id="CHEBI:456215"/>
        <dbReference type="EC" id="6.3.2.1"/>
    </reaction>
</comment>
<comment type="pathway">
    <text evidence="1">Cofactor biosynthesis; (R)-pantothenate biosynthesis; (R)-pantothenate from (R)-pantoate and beta-alanine: step 1/1.</text>
</comment>
<comment type="subunit">
    <text evidence="1">Homodimer.</text>
</comment>
<comment type="subcellular location">
    <subcellularLocation>
        <location evidence="1">Cytoplasm</location>
    </subcellularLocation>
</comment>
<comment type="miscellaneous">
    <text evidence="1">The reaction proceeds by a bi uni uni bi ping pong mechanism.</text>
</comment>
<comment type="similarity">
    <text evidence="1">Belongs to the pantothenate synthetase family.</text>
</comment>
<gene>
    <name evidence="1" type="primary">panC</name>
    <name type="ordered locus">Glov_0958</name>
</gene>
<keyword id="KW-0067">ATP-binding</keyword>
<keyword id="KW-0963">Cytoplasm</keyword>
<keyword id="KW-0436">Ligase</keyword>
<keyword id="KW-0547">Nucleotide-binding</keyword>
<keyword id="KW-0566">Pantothenate biosynthesis</keyword>
<keyword id="KW-1185">Reference proteome</keyword>
<sequence>MKLIHDVQEMQQTVLGLKRQGKRIAFVPTMGFLHEGHASLMREGRTRGDVLVLSIFVNPTQFGINEDLASYPRNLEGDCALAESCGVDLVFAPTAAGMYPPGFQTTVALGPLTKPLCGASRPGHFDGVAVVVTKLFGIVQPDCALFGKKDFQQLAIIRQMTLDLNLPVEIIGMPIVREPDGLAMSSRNSYLSVEQRQQALCLHRAILKVRELFKGGETSVDRLLGEARMIITAVPEASVDYLELRDSTTLEPVATAAADSLFALAVKIGSTRLIDNTVLGDTP</sequence>
<dbReference type="EC" id="6.3.2.1" evidence="1"/>
<dbReference type="EMBL" id="CP001089">
    <property type="protein sequence ID" value="ACD94681.1"/>
    <property type="molecule type" value="Genomic_DNA"/>
</dbReference>
<dbReference type="RefSeq" id="WP_012469031.1">
    <property type="nucleotide sequence ID" value="NC_010814.1"/>
</dbReference>
<dbReference type="SMR" id="B3E5L0"/>
<dbReference type="STRING" id="398767.Glov_0958"/>
<dbReference type="KEGG" id="glo:Glov_0958"/>
<dbReference type="eggNOG" id="COG0414">
    <property type="taxonomic scope" value="Bacteria"/>
</dbReference>
<dbReference type="HOGENOM" id="CLU_047148_0_0_7"/>
<dbReference type="OrthoDB" id="9773087at2"/>
<dbReference type="UniPathway" id="UPA00028">
    <property type="reaction ID" value="UER00005"/>
</dbReference>
<dbReference type="Proteomes" id="UP000002420">
    <property type="component" value="Chromosome"/>
</dbReference>
<dbReference type="GO" id="GO:0005829">
    <property type="term" value="C:cytosol"/>
    <property type="evidence" value="ECO:0007669"/>
    <property type="project" value="TreeGrafter"/>
</dbReference>
<dbReference type="GO" id="GO:0005524">
    <property type="term" value="F:ATP binding"/>
    <property type="evidence" value="ECO:0007669"/>
    <property type="project" value="UniProtKB-KW"/>
</dbReference>
<dbReference type="GO" id="GO:0004592">
    <property type="term" value="F:pantoate-beta-alanine ligase activity"/>
    <property type="evidence" value="ECO:0007669"/>
    <property type="project" value="UniProtKB-UniRule"/>
</dbReference>
<dbReference type="GO" id="GO:0015940">
    <property type="term" value="P:pantothenate biosynthetic process"/>
    <property type="evidence" value="ECO:0007669"/>
    <property type="project" value="UniProtKB-UniRule"/>
</dbReference>
<dbReference type="CDD" id="cd00560">
    <property type="entry name" value="PanC"/>
    <property type="match status" value="1"/>
</dbReference>
<dbReference type="FunFam" id="3.40.50.620:FF:000114">
    <property type="entry name" value="Pantothenate synthetase"/>
    <property type="match status" value="1"/>
</dbReference>
<dbReference type="Gene3D" id="3.40.50.620">
    <property type="entry name" value="HUPs"/>
    <property type="match status" value="1"/>
</dbReference>
<dbReference type="Gene3D" id="3.30.1300.10">
    <property type="entry name" value="Pantoate-beta-alanine ligase, C-terminal domain"/>
    <property type="match status" value="1"/>
</dbReference>
<dbReference type="HAMAP" id="MF_00158">
    <property type="entry name" value="PanC"/>
    <property type="match status" value="1"/>
</dbReference>
<dbReference type="InterPro" id="IPR003721">
    <property type="entry name" value="Pantoate_ligase"/>
</dbReference>
<dbReference type="InterPro" id="IPR042176">
    <property type="entry name" value="Pantoate_ligase_C"/>
</dbReference>
<dbReference type="InterPro" id="IPR014729">
    <property type="entry name" value="Rossmann-like_a/b/a_fold"/>
</dbReference>
<dbReference type="NCBIfam" id="TIGR00018">
    <property type="entry name" value="panC"/>
    <property type="match status" value="1"/>
</dbReference>
<dbReference type="PANTHER" id="PTHR21299">
    <property type="entry name" value="CYTIDYLATE KINASE/PANTOATE-BETA-ALANINE LIGASE"/>
    <property type="match status" value="1"/>
</dbReference>
<dbReference type="PANTHER" id="PTHR21299:SF1">
    <property type="entry name" value="PANTOATE--BETA-ALANINE LIGASE"/>
    <property type="match status" value="1"/>
</dbReference>
<dbReference type="Pfam" id="PF02569">
    <property type="entry name" value="Pantoate_ligase"/>
    <property type="match status" value="1"/>
</dbReference>
<dbReference type="SUPFAM" id="SSF52374">
    <property type="entry name" value="Nucleotidylyl transferase"/>
    <property type="match status" value="1"/>
</dbReference>
<name>PANC_TRIL1</name>
<proteinExistence type="inferred from homology"/>
<accession>B3E5L0</accession>
<protein>
    <recommendedName>
        <fullName evidence="1">Pantothenate synthetase</fullName>
        <shortName evidence="1">PS</shortName>
        <ecNumber evidence="1">6.3.2.1</ecNumber>
    </recommendedName>
    <alternativeName>
        <fullName evidence="1">Pantoate--beta-alanine ligase</fullName>
    </alternativeName>
    <alternativeName>
        <fullName evidence="1">Pantoate-activating enzyme</fullName>
    </alternativeName>
</protein>